<dbReference type="EMBL" id="AP005652">
    <property type="protein sequence ID" value="BAD36194.1"/>
    <property type="status" value="ALT_SEQ"/>
    <property type="molecule type" value="Genomic_DNA"/>
</dbReference>
<dbReference type="EMBL" id="AP008212">
    <property type="protein sequence ID" value="BAF19003.2"/>
    <property type="status" value="ALT_SEQ"/>
    <property type="molecule type" value="Genomic_DNA"/>
</dbReference>
<dbReference type="EMBL" id="AP014962">
    <property type="protein sequence ID" value="BAS96689.1"/>
    <property type="molecule type" value="Genomic_DNA"/>
</dbReference>
<dbReference type="EMBL" id="CM000143">
    <property type="protein sequence ID" value="EEE65288.1"/>
    <property type="molecule type" value="Genomic_DNA"/>
</dbReference>
<dbReference type="EMBL" id="AK243073">
    <property type="protein sequence ID" value="BAH01437.1"/>
    <property type="molecule type" value="mRNA"/>
</dbReference>
<dbReference type="RefSeq" id="XP_015641769.1">
    <property type="nucleotide sequence ID" value="XM_015786283.1"/>
</dbReference>
<dbReference type="SMR" id="Q69NP0"/>
<dbReference type="FunCoup" id="Q69NP0">
    <property type="interactions" value="2281"/>
</dbReference>
<dbReference type="STRING" id="39947.Q69NP0"/>
<dbReference type="PaxDb" id="39947-Q69NP0"/>
<dbReference type="EnsemblPlants" id="Os06t0205000-01">
    <property type="protein sequence ID" value="Os06t0205000-01"/>
    <property type="gene ID" value="Os06g0205000"/>
</dbReference>
<dbReference type="Gramene" id="Os06t0205000-01">
    <property type="protein sequence ID" value="Os06t0205000-01"/>
    <property type="gene ID" value="Os06g0205000"/>
</dbReference>
<dbReference type="KEGG" id="dosa:Os06g0205000"/>
<dbReference type="eggNOG" id="KOG3439">
    <property type="taxonomic scope" value="Eukaryota"/>
</dbReference>
<dbReference type="HOGENOM" id="CLU_106795_3_1_1"/>
<dbReference type="InParanoid" id="Q69NP0"/>
<dbReference type="OMA" id="YAKTHAW"/>
<dbReference type="OrthoDB" id="10003551at2759"/>
<dbReference type="Proteomes" id="UP000000763">
    <property type="component" value="Chromosome 6"/>
</dbReference>
<dbReference type="Proteomes" id="UP000007752">
    <property type="component" value="Chromosome 6"/>
</dbReference>
<dbReference type="Proteomes" id="UP000059680">
    <property type="component" value="Chromosome 6"/>
</dbReference>
<dbReference type="GO" id="GO:0034274">
    <property type="term" value="C:Atg12-Atg5-Atg16 complex"/>
    <property type="evidence" value="ECO:0000318"/>
    <property type="project" value="GO_Central"/>
</dbReference>
<dbReference type="GO" id="GO:0000421">
    <property type="term" value="C:autophagosome membrane"/>
    <property type="evidence" value="ECO:0000318"/>
    <property type="project" value="GO_Central"/>
</dbReference>
<dbReference type="GO" id="GO:0034045">
    <property type="term" value="C:phagophore assembly site membrane"/>
    <property type="evidence" value="ECO:0000318"/>
    <property type="project" value="GO_Central"/>
</dbReference>
<dbReference type="GO" id="GO:0031386">
    <property type="term" value="F:protein tag activity"/>
    <property type="evidence" value="ECO:0000318"/>
    <property type="project" value="GO_Central"/>
</dbReference>
<dbReference type="GO" id="GO:0000045">
    <property type="term" value="P:autophagosome assembly"/>
    <property type="evidence" value="ECO:0000318"/>
    <property type="project" value="GO_Central"/>
</dbReference>
<dbReference type="GO" id="GO:0097352">
    <property type="term" value="P:autophagosome maturation"/>
    <property type="evidence" value="ECO:0000318"/>
    <property type="project" value="GO_Central"/>
</dbReference>
<dbReference type="GO" id="GO:0000422">
    <property type="term" value="P:autophagy of mitochondrion"/>
    <property type="evidence" value="ECO:0000318"/>
    <property type="project" value="GO_Central"/>
</dbReference>
<dbReference type="GO" id="GO:0061723">
    <property type="term" value="P:glycophagy"/>
    <property type="evidence" value="ECO:0000318"/>
    <property type="project" value="GO_Central"/>
</dbReference>
<dbReference type="GO" id="GO:0034727">
    <property type="term" value="P:piecemeal microautophagy of the nucleus"/>
    <property type="evidence" value="ECO:0000318"/>
    <property type="project" value="GO_Central"/>
</dbReference>
<dbReference type="GO" id="GO:0015031">
    <property type="term" value="P:protein transport"/>
    <property type="evidence" value="ECO:0007669"/>
    <property type="project" value="UniProtKB-KW"/>
</dbReference>
<dbReference type="CDD" id="cd01612">
    <property type="entry name" value="Ubl_ATG12"/>
    <property type="match status" value="1"/>
</dbReference>
<dbReference type="FunFam" id="3.10.20.90:FF:000150">
    <property type="entry name" value="Ubiquitin-like protein ATG12"/>
    <property type="match status" value="1"/>
</dbReference>
<dbReference type="Gene3D" id="3.10.20.90">
    <property type="entry name" value="Phosphatidylinositol 3-kinase Catalytic Subunit, Chain A, domain 1"/>
    <property type="match status" value="1"/>
</dbReference>
<dbReference type="InterPro" id="IPR007242">
    <property type="entry name" value="Atg12"/>
</dbReference>
<dbReference type="InterPro" id="IPR029071">
    <property type="entry name" value="Ubiquitin-like_domsf"/>
</dbReference>
<dbReference type="PANTHER" id="PTHR13385">
    <property type="entry name" value="AUTOPHAGY PROTEIN 12"/>
    <property type="match status" value="1"/>
</dbReference>
<dbReference type="PANTHER" id="PTHR13385:SF3">
    <property type="entry name" value="UBIQUITIN-LIKE PROTEIN ATG12"/>
    <property type="match status" value="1"/>
</dbReference>
<dbReference type="Pfam" id="PF04110">
    <property type="entry name" value="APG12"/>
    <property type="match status" value="1"/>
</dbReference>
<dbReference type="SUPFAM" id="SSF54236">
    <property type="entry name" value="Ubiquitin-like"/>
    <property type="match status" value="1"/>
</dbReference>
<keyword id="KW-0072">Autophagy</keyword>
<keyword id="KW-0963">Cytoplasm</keyword>
<keyword id="KW-1017">Isopeptide bond</keyword>
<keyword id="KW-0653">Protein transport</keyword>
<keyword id="KW-1185">Reference proteome</keyword>
<keyword id="KW-0813">Transport</keyword>
<keyword id="KW-0833">Ubl conjugation pathway</keyword>
<organism>
    <name type="scientific">Oryza sativa subsp. japonica</name>
    <name type="common">Rice</name>
    <dbReference type="NCBI Taxonomy" id="39947"/>
    <lineage>
        <taxon>Eukaryota</taxon>
        <taxon>Viridiplantae</taxon>
        <taxon>Streptophyta</taxon>
        <taxon>Embryophyta</taxon>
        <taxon>Tracheophyta</taxon>
        <taxon>Spermatophyta</taxon>
        <taxon>Magnoliopsida</taxon>
        <taxon>Liliopsida</taxon>
        <taxon>Poales</taxon>
        <taxon>Poaceae</taxon>
        <taxon>BOP clade</taxon>
        <taxon>Oryzoideae</taxon>
        <taxon>Oryzeae</taxon>
        <taxon>Oryzinae</taxon>
        <taxon>Oryza</taxon>
        <taxon>Oryza sativa</taxon>
    </lineage>
</organism>
<comment type="function">
    <text evidence="1">Ubiquitin-like protein involved in cytoplasm to vacuole transport (Cvt) and autophagy vesicles formation. Conjugation with ATG5 through a ubiquitin-like conjugating system is essential for its function. ATG12/ATG5 conjugate has an essential role in plant nutrient recycling (By similarity).</text>
</comment>
<comment type="subcellular location">
    <subcellularLocation>
        <location evidence="1">Cytoplasm</location>
    </subcellularLocation>
</comment>
<comment type="similarity">
    <text evidence="2">Belongs to the ATG12 family.</text>
</comment>
<comment type="sequence caution" evidence="2">
    <conflict type="erroneous gene model prediction">
        <sequence resource="EMBL-CDS" id="BAD36194"/>
    </conflict>
</comment>
<comment type="sequence caution" evidence="2">
    <conflict type="erroneous gene model prediction">
        <sequence resource="EMBL-CDS" id="BAF19003"/>
    </conflict>
</comment>
<gene>
    <name type="primary">ATG12</name>
    <name type="synonym">APG12</name>
    <name type="ordered locus">Os06g0205000</name>
    <name type="ordered locus">LOC_Os06g10340</name>
    <name type="ORF">J100018F14</name>
    <name type="ORF">OsJ_019683</name>
    <name type="ORF">OsJ_20516</name>
    <name type="ORF">OSJNBb0015B15.15</name>
</gene>
<reference key="1">
    <citation type="journal article" date="2005" name="Nature">
        <title>The map-based sequence of the rice genome.</title>
        <authorList>
            <consortium name="International rice genome sequencing project (IRGSP)"/>
        </authorList>
    </citation>
    <scope>NUCLEOTIDE SEQUENCE [LARGE SCALE GENOMIC DNA]</scope>
    <source>
        <strain>cv. Nipponbare</strain>
    </source>
</reference>
<reference key="2">
    <citation type="journal article" date="2008" name="Nucleic Acids Res.">
        <title>The rice annotation project database (RAP-DB): 2008 update.</title>
        <authorList>
            <consortium name="The rice annotation project (RAP)"/>
        </authorList>
    </citation>
    <scope>GENOME REANNOTATION</scope>
    <source>
        <strain>cv. Nipponbare</strain>
    </source>
</reference>
<reference key="3">
    <citation type="journal article" date="2013" name="Rice">
        <title>Improvement of the Oryza sativa Nipponbare reference genome using next generation sequence and optical map data.</title>
        <authorList>
            <person name="Kawahara Y."/>
            <person name="de la Bastide M."/>
            <person name="Hamilton J.P."/>
            <person name="Kanamori H."/>
            <person name="McCombie W.R."/>
            <person name="Ouyang S."/>
            <person name="Schwartz D.C."/>
            <person name="Tanaka T."/>
            <person name="Wu J."/>
            <person name="Zhou S."/>
            <person name="Childs K.L."/>
            <person name="Davidson R.M."/>
            <person name="Lin H."/>
            <person name="Quesada-Ocampo L."/>
            <person name="Vaillancourt B."/>
            <person name="Sakai H."/>
            <person name="Lee S.S."/>
            <person name="Kim J."/>
            <person name="Numa H."/>
            <person name="Itoh T."/>
            <person name="Buell C.R."/>
            <person name="Matsumoto T."/>
        </authorList>
    </citation>
    <scope>GENOME REANNOTATION</scope>
    <source>
        <strain>cv. Nipponbare</strain>
    </source>
</reference>
<reference key="4">
    <citation type="journal article" date="2005" name="PLoS Biol.">
        <title>The genomes of Oryza sativa: a history of duplications.</title>
        <authorList>
            <person name="Yu J."/>
            <person name="Wang J."/>
            <person name="Lin W."/>
            <person name="Li S."/>
            <person name="Li H."/>
            <person name="Zhou J."/>
            <person name="Ni P."/>
            <person name="Dong W."/>
            <person name="Hu S."/>
            <person name="Zeng C."/>
            <person name="Zhang J."/>
            <person name="Zhang Y."/>
            <person name="Li R."/>
            <person name="Xu Z."/>
            <person name="Li S."/>
            <person name="Li X."/>
            <person name="Zheng H."/>
            <person name="Cong L."/>
            <person name="Lin L."/>
            <person name="Yin J."/>
            <person name="Geng J."/>
            <person name="Li G."/>
            <person name="Shi J."/>
            <person name="Liu J."/>
            <person name="Lv H."/>
            <person name="Li J."/>
            <person name="Wang J."/>
            <person name="Deng Y."/>
            <person name="Ran L."/>
            <person name="Shi X."/>
            <person name="Wang X."/>
            <person name="Wu Q."/>
            <person name="Li C."/>
            <person name="Ren X."/>
            <person name="Wang J."/>
            <person name="Wang X."/>
            <person name="Li D."/>
            <person name="Liu D."/>
            <person name="Zhang X."/>
            <person name="Ji Z."/>
            <person name="Zhao W."/>
            <person name="Sun Y."/>
            <person name="Zhang Z."/>
            <person name="Bao J."/>
            <person name="Han Y."/>
            <person name="Dong L."/>
            <person name="Ji J."/>
            <person name="Chen P."/>
            <person name="Wu S."/>
            <person name="Liu J."/>
            <person name="Xiao Y."/>
            <person name="Bu D."/>
            <person name="Tan J."/>
            <person name="Yang L."/>
            <person name="Ye C."/>
            <person name="Zhang J."/>
            <person name="Xu J."/>
            <person name="Zhou Y."/>
            <person name="Yu Y."/>
            <person name="Zhang B."/>
            <person name="Zhuang S."/>
            <person name="Wei H."/>
            <person name="Liu B."/>
            <person name="Lei M."/>
            <person name="Yu H."/>
            <person name="Li Y."/>
            <person name="Xu H."/>
            <person name="Wei S."/>
            <person name="He X."/>
            <person name="Fang L."/>
            <person name="Zhang Z."/>
            <person name="Zhang Y."/>
            <person name="Huang X."/>
            <person name="Su Z."/>
            <person name="Tong W."/>
            <person name="Li J."/>
            <person name="Tong Z."/>
            <person name="Li S."/>
            <person name="Ye J."/>
            <person name="Wang L."/>
            <person name="Fang L."/>
            <person name="Lei T."/>
            <person name="Chen C.-S."/>
            <person name="Chen H.-C."/>
            <person name="Xu Z."/>
            <person name="Li H."/>
            <person name="Huang H."/>
            <person name="Zhang F."/>
            <person name="Xu H."/>
            <person name="Li N."/>
            <person name="Zhao C."/>
            <person name="Li S."/>
            <person name="Dong L."/>
            <person name="Huang Y."/>
            <person name="Li L."/>
            <person name="Xi Y."/>
            <person name="Qi Q."/>
            <person name="Li W."/>
            <person name="Zhang B."/>
            <person name="Hu W."/>
            <person name="Zhang Y."/>
            <person name="Tian X."/>
            <person name="Jiao Y."/>
            <person name="Liang X."/>
            <person name="Jin J."/>
            <person name="Gao L."/>
            <person name="Zheng W."/>
            <person name="Hao B."/>
            <person name="Liu S.-M."/>
            <person name="Wang W."/>
            <person name="Yuan L."/>
            <person name="Cao M."/>
            <person name="McDermott J."/>
            <person name="Samudrala R."/>
            <person name="Wang J."/>
            <person name="Wong G.K.-S."/>
            <person name="Yang H."/>
        </authorList>
    </citation>
    <scope>NUCLEOTIDE SEQUENCE [LARGE SCALE GENOMIC DNA]</scope>
    <source>
        <strain>cv. Nipponbare</strain>
    </source>
</reference>
<reference key="5">
    <citation type="submission" date="2006-10" db="EMBL/GenBank/DDBJ databases">
        <title>Oryza sativa full length cDNA.</title>
        <authorList>
            <person name="Kikuchi S."/>
        </authorList>
    </citation>
    <scope>NUCLEOTIDE SEQUENCE [LARGE SCALE MRNA]</scope>
    <source>
        <strain>cv. Nipponbare</strain>
    </source>
</reference>
<accession>Q69NP0</accession>
<accession>A0A0N7KLQ7</accession>
<accession>A3B9G1</accession>
<accession>B7F9Y9</accession>
<accession>Q0DDS0</accession>
<protein>
    <recommendedName>
        <fullName>Ubiquitin-like protein ATG12</fullName>
    </recommendedName>
    <alternativeName>
        <fullName>Autophagy-related protein 12</fullName>
        <shortName>APG12-like</shortName>
    </alternativeName>
</protein>
<evidence type="ECO:0000250" key="1"/>
<evidence type="ECO:0000305" key="2"/>
<feature type="chain" id="PRO_0000250544" description="Ubiquitin-like protein ATG12">
    <location>
        <begin position="1"/>
        <end position="93"/>
    </location>
</feature>
<feature type="cross-link" description="Glycyl lysine isopeptide (Gly-Lys) (interchain with K-138 in ATG5)" evidence="1">
    <location>
        <position position="93"/>
    </location>
</feature>
<proteinExistence type="inferred from homology"/>
<sequence length="93" mass="10461">MAAVAAEQKKVVVHFRSTGNAPQLKQSKFKIGGNEKFLKIIDFLRRQIHQDTVFLYVNSAFSPNPDELIIDLYNNFGIDGQLVVNYASSMAWG</sequence>
<name>ATG12_ORYSJ</name>